<organism>
    <name type="scientific">Bacillus subtilis (strain 168)</name>
    <dbReference type="NCBI Taxonomy" id="224308"/>
    <lineage>
        <taxon>Bacteria</taxon>
        <taxon>Bacillati</taxon>
        <taxon>Bacillota</taxon>
        <taxon>Bacilli</taxon>
        <taxon>Bacillales</taxon>
        <taxon>Bacillaceae</taxon>
        <taxon>Bacillus</taxon>
    </lineage>
</organism>
<gene>
    <name evidence="1" type="primary">mraZ</name>
    <name evidence="4" type="synonym">yllB</name>
    <name type="ordered locus">BSU15130</name>
</gene>
<proteinExistence type="evidence at transcript level"/>
<comment type="subunit">
    <text evidence="1">Forms oligomers.</text>
</comment>
<comment type="subcellular location">
    <subcellularLocation>
        <location evidence="1">Cytoplasm</location>
        <location evidence="1">Nucleoid</location>
    </subcellularLocation>
</comment>
<comment type="induction">
    <text evidence="3">Transcribed at a constant level in all growth phases. Part of the mraZ-rsmH-ftsL-pbpB operon.</text>
</comment>
<comment type="disruption phenotype">
    <text evidence="3">No visible phenotype.</text>
</comment>
<comment type="similarity">
    <text evidence="1">Belongs to the MraZ family.</text>
</comment>
<sequence>MFMGEYQHTIDAKGRMIVPAKFREGLGEQFVLTRGLDQCLFGYPMHEWKQIEEKLKALPLTKKDARAFTRFFFSGATECELDKQGRVNIASSLLNYAKLEKECVVIGVSNRIELWSKVIWEQYTEEQEDSFAEIAENMIGFDI</sequence>
<keyword id="KW-0963">Cytoplasm</keyword>
<keyword id="KW-0238">DNA-binding</keyword>
<keyword id="KW-1185">Reference proteome</keyword>
<keyword id="KW-0677">Repeat</keyword>
<keyword id="KW-0804">Transcription</keyword>
<keyword id="KW-0805">Transcription regulation</keyword>
<reference key="1">
    <citation type="journal article" date="1996" name="J. Bacteriol.">
        <title>A complex four-gene operon containing essential cell division gene pbpB in Bacillus subtilis.</title>
        <authorList>
            <person name="Daniel R.A."/>
            <person name="Williams A.M."/>
            <person name="Errington J."/>
        </authorList>
    </citation>
    <scope>NUCLEOTIDE SEQUENCE [GENOMIC DNA]</scope>
    <scope>INDUCTION</scope>
    <scope>DISRUPTION PHENOTYPE</scope>
    <source>
        <strain>168</strain>
    </source>
</reference>
<reference key="2">
    <citation type="journal article" date="1997" name="Nature">
        <title>The complete genome sequence of the Gram-positive bacterium Bacillus subtilis.</title>
        <authorList>
            <person name="Kunst F."/>
            <person name="Ogasawara N."/>
            <person name="Moszer I."/>
            <person name="Albertini A.M."/>
            <person name="Alloni G."/>
            <person name="Azevedo V."/>
            <person name="Bertero M.G."/>
            <person name="Bessieres P."/>
            <person name="Bolotin A."/>
            <person name="Borchert S."/>
            <person name="Borriss R."/>
            <person name="Boursier L."/>
            <person name="Brans A."/>
            <person name="Braun M."/>
            <person name="Brignell S.C."/>
            <person name="Bron S."/>
            <person name="Brouillet S."/>
            <person name="Bruschi C.V."/>
            <person name="Caldwell B."/>
            <person name="Capuano V."/>
            <person name="Carter N.M."/>
            <person name="Choi S.-K."/>
            <person name="Codani J.-J."/>
            <person name="Connerton I.F."/>
            <person name="Cummings N.J."/>
            <person name="Daniel R.A."/>
            <person name="Denizot F."/>
            <person name="Devine K.M."/>
            <person name="Duesterhoeft A."/>
            <person name="Ehrlich S.D."/>
            <person name="Emmerson P.T."/>
            <person name="Entian K.-D."/>
            <person name="Errington J."/>
            <person name="Fabret C."/>
            <person name="Ferrari E."/>
            <person name="Foulger D."/>
            <person name="Fritz C."/>
            <person name="Fujita M."/>
            <person name="Fujita Y."/>
            <person name="Fuma S."/>
            <person name="Galizzi A."/>
            <person name="Galleron N."/>
            <person name="Ghim S.-Y."/>
            <person name="Glaser P."/>
            <person name="Goffeau A."/>
            <person name="Golightly E.J."/>
            <person name="Grandi G."/>
            <person name="Guiseppi G."/>
            <person name="Guy B.J."/>
            <person name="Haga K."/>
            <person name="Haiech J."/>
            <person name="Harwood C.R."/>
            <person name="Henaut A."/>
            <person name="Hilbert H."/>
            <person name="Holsappel S."/>
            <person name="Hosono S."/>
            <person name="Hullo M.-F."/>
            <person name="Itaya M."/>
            <person name="Jones L.-M."/>
            <person name="Joris B."/>
            <person name="Karamata D."/>
            <person name="Kasahara Y."/>
            <person name="Klaerr-Blanchard M."/>
            <person name="Klein C."/>
            <person name="Kobayashi Y."/>
            <person name="Koetter P."/>
            <person name="Koningstein G."/>
            <person name="Krogh S."/>
            <person name="Kumano M."/>
            <person name="Kurita K."/>
            <person name="Lapidus A."/>
            <person name="Lardinois S."/>
            <person name="Lauber J."/>
            <person name="Lazarevic V."/>
            <person name="Lee S.-M."/>
            <person name="Levine A."/>
            <person name="Liu H."/>
            <person name="Masuda S."/>
            <person name="Mauel C."/>
            <person name="Medigue C."/>
            <person name="Medina N."/>
            <person name="Mellado R.P."/>
            <person name="Mizuno M."/>
            <person name="Moestl D."/>
            <person name="Nakai S."/>
            <person name="Noback M."/>
            <person name="Noone D."/>
            <person name="O'Reilly M."/>
            <person name="Ogawa K."/>
            <person name="Ogiwara A."/>
            <person name="Oudega B."/>
            <person name="Park S.-H."/>
            <person name="Parro V."/>
            <person name="Pohl T.M."/>
            <person name="Portetelle D."/>
            <person name="Porwollik S."/>
            <person name="Prescott A.M."/>
            <person name="Presecan E."/>
            <person name="Pujic P."/>
            <person name="Purnelle B."/>
            <person name="Rapoport G."/>
            <person name="Rey M."/>
            <person name="Reynolds S."/>
            <person name="Rieger M."/>
            <person name="Rivolta C."/>
            <person name="Rocha E."/>
            <person name="Roche B."/>
            <person name="Rose M."/>
            <person name="Sadaie Y."/>
            <person name="Sato T."/>
            <person name="Scanlan E."/>
            <person name="Schleich S."/>
            <person name="Schroeter R."/>
            <person name="Scoffone F."/>
            <person name="Sekiguchi J."/>
            <person name="Sekowska A."/>
            <person name="Seror S.J."/>
            <person name="Serror P."/>
            <person name="Shin B.-S."/>
            <person name="Soldo B."/>
            <person name="Sorokin A."/>
            <person name="Tacconi E."/>
            <person name="Takagi T."/>
            <person name="Takahashi H."/>
            <person name="Takemaru K."/>
            <person name="Takeuchi M."/>
            <person name="Tamakoshi A."/>
            <person name="Tanaka T."/>
            <person name="Terpstra P."/>
            <person name="Tognoni A."/>
            <person name="Tosato V."/>
            <person name="Uchiyama S."/>
            <person name="Vandenbol M."/>
            <person name="Vannier F."/>
            <person name="Vassarotti A."/>
            <person name="Viari A."/>
            <person name="Wambutt R."/>
            <person name="Wedler E."/>
            <person name="Wedler H."/>
            <person name="Weitzenegger T."/>
            <person name="Winters P."/>
            <person name="Wipat A."/>
            <person name="Yamamoto H."/>
            <person name="Yamane K."/>
            <person name="Yasumoto K."/>
            <person name="Yata K."/>
            <person name="Yoshida K."/>
            <person name="Yoshikawa H.-F."/>
            <person name="Zumstein E."/>
            <person name="Yoshikawa H."/>
            <person name="Danchin A."/>
        </authorList>
    </citation>
    <scope>NUCLEOTIDE SEQUENCE [LARGE SCALE GENOMIC DNA]</scope>
    <source>
        <strain>168</strain>
    </source>
</reference>
<evidence type="ECO:0000255" key="1">
    <source>
        <dbReference type="HAMAP-Rule" id="MF_01008"/>
    </source>
</evidence>
<evidence type="ECO:0000255" key="2">
    <source>
        <dbReference type="PROSITE-ProRule" id="PRU01076"/>
    </source>
</evidence>
<evidence type="ECO:0000269" key="3">
    <source>
    </source>
</evidence>
<evidence type="ECO:0000303" key="4">
    <source>
    </source>
</evidence>
<accession>P55343</accession>
<dbReference type="EMBL" id="Z68230">
    <property type="protein sequence ID" value="CAA92524.1"/>
    <property type="molecule type" value="Genomic_DNA"/>
</dbReference>
<dbReference type="EMBL" id="AL009126">
    <property type="protein sequence ID" value="CAB13386.1"/>
    <property type="molecule type" value="Genomic_DNA"/>
</dbReference>
<dbReference type="PIR" id="H69875">
    <property type="entry name" value="H69875"/>
</dbReference>
<dbReference type="RefSeq" id="NP_389396.1">
    <property type="nucleotide sequence ID" value="NC_000964.3"/>
</dbReference>
<dbReference type="RefSeq" id="WP_003221402.1">
    <property type="nucleotide sequence ID" value="NZ_OZ025638.1"/>
</dbReference>
<dbReference type="SMR" id="P55343"/>
<dbReference type="FunCoup" id="P55343">
    <property type="interactions" value="273"/>
</dbReference>
<dbReference type="STRING" id="224308.BSU15130"/>
<dbReference type="PaxDb" id="224308-BSU15130"/>
<dbReference type="EnsemblBacteria" id="CAB13386">
    <property type="protein sequence ID" value="CAB13386"/>
    <property type="gene ID" value="BSU_15130"/>
</dbReference>
<dbReference type="GeneID" id="86873978"/>
<dbReference type="GeneID" id="935932"/>
<dbReference type="KEGG" id="bsu:BSU15130"/>
<dbReference type="PATRIC" id="fig|224308.179.peg.1649"/>
<dbReference type="eggNOG" id="COG2001">
    <property type="taxonomic scope" value="Bacteria"/>
</dbReference>
<dbReference type="InParanoid" id="P55343"/>
<dbReference type="OrthoDB" id="9807753at2"/>
<dbReference type="PhylomeDB" id="P55343"/>
<dbReference type="BioCyc" id="BSUB:BSU15130-MONOMER"/>
<dbReference type="PRO" id="PR:P55343"/>
<dbReference type="Proteomes" id="UP000001570">
    <property type="component" value="Chromosome"/>
</dbReference>
<dbReference type="GO" id="GO:0005737">
    <property type="term" value="C:cytoplasm"/>
    <property type="evidence" value="ECO:0007669"/>
    <property type="project" value="UniProtKB-UniRule"/>
</dbReference>
<dbReference type="GO" id="GO:0009295">
    <property type="term" value="C:nucleoid"/>
    <property type="evidence" value="ECO:0007669"/>
    <property type="project" value="UniProtKB-SubCell"/>
</dbReference>
<dbReference type="GO" id="GO:0003700">
    <property type="term" value="F:DNA-binding transcription factor activity"/>
    <property type="evidence" value="ECO:0000318"/>
    <property type="project" value="GO_Central"/>
</dbReference>
<dbReference type="GO" id="GO:0000976">
    <property type="term" value="F:transcription cis-regulatory region binding"/>
    <property type="evidence" value="ECO:0000318"/>
    <property type="project" value="GO_Central"/>
</dbReference>
<dbReference type="GO" id="GO:2000143">
    <property type="term" value="P:negative regulation of DNA-templated transcription initiation"/>
    <property type="evidence" value="ECO:0000318"/>
    <property type="project" value="GO_Central"/>
</dbReference>
<dbReference type="CDD" id="cd16321">
    <property type="entry name" value="MraZ_C"/>
    <property type="match status" value="1"/>
</dbReference>
<dbReference type="CDD" id="cd16320">
    <property type="entry name" value="MraZ_N"/>
    <property type="match status" value="1"/>
</dbReference>
<dbReference type="FunFam" id="3.40.1550.20:FF:000002">
    <property type="entry name" value="Transcriptional regulator MraZ"/>
    <property type="match status" value="1"/>
</dbReference>
<dbReference type="Gene3D" id="3.40.1550.20">
    <property type="entry name" value="Transcriptional regulator MraZ domain"/>
    <property type="match status" value="1"/>
</dbReference>
<dbReference type="HAMAP" id="MF_01008">
    <property type="entry name" value="MraZ"/>
    <property type="match status" value="1"/>
</dbReference>
<dbReference type="InterPro" id="IPR003444">
    <property type="entry name" value="MraZ"/>
</dbReference>
<dbReference type="InterPro" id="IPR035644">
    <property type="entry name" value="MraZ_C"/>
</dbReference>
<dbReference type="InterPro" id="IPR020603">
    <property type="entry name" value="MraZ_dom"/>
</dbReference>
<dbReference type="InterPro" id="IPR035642">
    <property type="entry name" value="MraZ_N"/>
</dbReference>
<dbReference type="InterPro" id="IPR038619">
    <property type="entry name" value="MraZ_sf"/>
</dbReference>
<dbReference type="InterPro" id="IPR007159">
    <property type="entry name" value="SpoVT-AbrB_dom"/>
</dbReference>
<dbReference type="InterPro" id="IPR037914">
    <property type="entry name" value="SpoVT-AbrB_sf"/>
</dbReference>
<dbReference type="NCBIfam" id="TIGR00242">
    <property type="entry name" value="division/cell wall cluster transcriptional repressor MraZ"/>
    <property type="match status" value="1"/>
</dbReference>
<dbReference type="PANTHER" id="PTHR34701">
    <property type="entry name" value="TRANSCRIPTIONAL REGULATOR MRAZ"/>
    <property type="match status" value="1"/>
</dbReference>
<dbReference type="PANTHER" id="PTHR34701:SF1">
    <property type="entry name" value="TRANSCRIPTIONAL REGULATOR MRAZ"/>
    <property type="match status" value="1"/>
</dbReference>
<dbReference type="Pfam" id="PF02381">
    <property type="entry name" value="MraZ"/>
    <property type="match status" value="2"/>
</dbReference>
<dbReference type="SUPFAM" id="SSF89447">
    <property type="entry name" value="AbrB/MazE/MraZ-like"/>
    <property type="match status" value="1"/>
</dbReference>
<dbReference type="PROSITE" id="PS51740">
    <property type="entry name" value="SPOVT_ABRB"/>
    <property type="match status" value="2"/>
</dbReference>
<name>MRAZ_BACSU</name>
<feature type="chain" id="PRO_0000108459" description="Transcriptional regulator MraZ">
    <location>
        <begin position="1"/>
        <end position="143"/>
    </location>
</feature>
<feature type="domain" description="SpoVT-AbrB 1" evidence="2">
    <location>
        <begin position="5"/>
        <end position="47"/>
    </location>
</feature>
<feature type="domain" description="SpoVT-AbrB 2" evidence="2">
    <location>
        <begin position="76"/>
        <end position="119"/>
    </location>
</feature>
<protein>
    <recommendedName>
        <fullName>Transcriptional regulator MraZ</fullName>
    </recommendedName>
</protein>